<dbReference type="EC" id="4.2.1.126" evidence="1"/>
<dbReference type="EMBL" id="CP001321">
    <property type="protein sequence ID" value="ACL32353.1"/>
    <property type="molecule type" value="Genomic_DNA"/>
</dbReference>
<dbReference type="RefSeq" id="WP_012621875.1">
    <property type="nucleotide sequence ID" value="NC_011852.1"/>
</dbReference>
<dbReference type="SMR" id="B8F4V1"/>
<dbReference type="STRING" id="557723.HAPS_0707"/>
<dbReference type="KEGG" id="hap:HAPS_0707"/>
<dbReference type="PATRIC" id="fig|557723.8.peg.708"/>
<dbReference type="HOGENOM" id="CLU_049049_1_1_6"/>
<dbReference type="UniPathway" id="UPA00342"/>
<dbReference type="UniPathway" id="UPA00343"/>
<dbReference type="UniPathway" id="UPA00544"/>
<dbReference type="Proteomes" id="UP000006743">
    <property type="component" value="Chromosome"/>
</dbReference>
<dbReference type="GO" id="GO:0097367">
    <property type="term" value="F:carbohydrate derivative binding"/>
    <property type="evidence" value="ECO:0007669"/>
    <property type="project" value="InterPro"/>
</dbReference>
<dbReference type="GO" id="GO:0016835">
    <property type="term" value="F:carbon-oxygen lyase activity"/>
    <property type="evidence" value="ECO:0007669"/>
    <property type="project" value="UniProtKB-UniRule"/>
</dbReference>
<dbReference type="GO" id="GO:0016803">
    <property type="term" value="F:ether hydrolase activity"/>
    <property type="evidence" value="ECO:0007669"/>
    <property type="project" value="TreeGrafter"/>
</dbReference>
<dbReference type="GO" id="GO:0097175">
    <property type="term" value="P:1,6-anhydro-N-acetyl-beta-muramic acid catabolic process"/>
    <property type="evidence" value="ECO:0007669"/>
    <property type="project" value="UniProtKB-UniRule"/>
</dbReference>
<dbReference type="GO" id="GO:0046348">
    <property type="term" value="P:amino sugar catabolic process"/>
    <property type="evidence" value="ECO:0007669"/>
    <property type="project" value="InterPro"/>
</dbReference>
<dbReference type="GO" id="GO:0097173">
    <property type="term" value="P:N-acetylmuramic acid catabolic process"/>
    <property type="evidence" value="ECO:0007669"/>
    <property type="project" value="UniProtKB-UniPathway"/>
</dbReference>
<dbReference type="GO" id="GO:0009254">
    <property type="term" value="P:peptidoglycan turnover"/>
    <property type="evidence" value="ECO:0007669"/>
    <property type="project" value="UniProtKB-UniRule"/>
</dbReference>
<dbReference type="CDD" id="cd05007">
    <property type="entry name" value="SIS_Etherase"/>
    <property type="match status" value="1"/>
</dbReference>
<dbReference type="FunFam" id="1.10.8.1080:FF:000001">
    <property type="entry name" value="N-acetylmuramic acid 6-phosphate etherase"/>
    <property type="match status" value="1"/>
</dbReference>
<dbReference type="FunFam" id="3.40.50.10490:FF:000014">
    <property type="entry name" value="N-acetylmuramic acid 6-phosphate etherase"/>
    <property type="match status" value="1"/>
</dbReference>
<dbReference type="Gene3D" id="1.10.8.1080">
    <property type="match status" value="1"/>
</dbReference>
<dbReference type="Gene3D" id="3.40.50.10490">
    <property type="entry name" value="Glucose-6-phosphate isomerase like protein, domain 1"/>
    <property type="match status" value="1"/>
</dbReference>
<dbReference type="HAMAP" id="MF_00068">
    <property type="entry name" value="MurQ"/>
    <property type="match status" value="1"/>
</dbReference>
<dbReference type="InterPro" id="IPR005488">
    <property type="entry name" value="Etherase_MurQ"/>
</dbReference>
<dbReference type="InterPro" id="IPR005486">
    <property type="entry name" value="Glucokinase_regulatory_CS"/>
</dbReference>
<dbReference type="InterPro" id="IPR040190">
    <property type="entry name" value="MURQ/GCKR"/>
</dbReference>
<dbReference type="InterPro" id="IPR001347">
    <property type="entry name" value="SIS_dom"/>
</dbReference>
<dbReference type="InterPro" id="IPR046348">
    <property type="entry name" value="SIS_dom_sf"/>
</dbReference>
<dbReference type="NCBIfam" id="TIGR00274">
    <property type="entry name" value="N-acetylmuramic acid 6-phosphate etherase"/>
    <property type="match status" value="1"/>
</dbReference>
<dbReference type="NCBIfam" id="NF003915">
    <property type="entry name" value="PRK05441.1"/>
    <property type="match status" value="1"/>
</dbReference>
<dbReference type="NCBIfam" id="NF009222">
    <property type="entry name" value="PRK12570.1"/>
    <property type="match status" value="1"/>
</dbReference>
<dbReference type="PANTHER" id="PTHR10088">
    <property type="entry name" value="GLUCOKINASE REGULATORY PROTEIN"/>
    <property type="match status" value="1"/>
</dbReference>
<dbReference type="PANTHER" id="PTHR10088:SF4">
    <property type="entry name" value="GLUCOKINASE REGULATORY PROTEIN"/>
    <property type="match status" value="1"/>
</dbReference>
<dbReference type="Pfam" id="PF20741">
    <property type="entry name" value="GKRP-like_C"/>
    <property type="match status" value="1"/>
</dbReference>
<dbReference type="Pfam" id="PF22645">
    <property type="entry name" value="GKRP_SIS_N"/>
    <property type="match status" value="1"/>
</dbReference>
<dbReference type="SUPFAM" id="SSF53697">
    <property type="entry name" value="SIS domain"/>
    <property type="match status" value="1"/>
</dbReference>
<dbReference type="PROSITE" id="PS01272">
    <property type="entry name" value="GCKR"/>
    <property type="match status" value="1"/>
</dbReference>
<dbReference type="PROSITE" id="PS51464">
    <property type="entry name" value="SIS"/>
    <property type="match status" value="1"/>
</dbReference>
<organism>
    <name type="scientific">Glaesserella parasuis serovar 5 (strain SH0165)</name>
    <name type="common">Haemophilus parasuis</name>
    <dbReference type="NCBI Taxonomy" id="557723"/>
    <lineage>
        <taxon>Bacteria</taxon>
        <taxon>Pseudomonadati</taxon>
        <taxon>Pseudomonadota</taxon>
        <taxon>Gammaproteobacteria</taxon>
        <taxon>Pasteurellales</taxon>
        <taxon>Pasteurellaceae</taxon>
        <taxon>Glaesserella</taxon>
    </lineage>
</organism>
<accession>B8F4V1</accession>
<name>MURQ_GLAP5</name>
<keyword id="KW-0119">Carbohydrate metabolism</keyword>
<keyword id="KW-0456">Lyase</keyword>
<keyword id="KW-1185">Reference proteome</keyword>
<sequence length="304" mass="32436">MAEQDLLKTLGQLITEQRNPNSMQIDTLSAYEIVQIINNEDKQVPLAIEKVLPQIAQAVEKIVEAFQQGGRLVYIGAGTSGRLGVLDASECPPTFGVSPEMVKGIIAGGERALRHPIEGAEDNKEAGKQDLQAVEFSPKDVLVGIAASGRTPYVLGALAYAKELGAITVSIASNPNSAMSQIADIVIDTVVGAEVLTGSSRMKSGTAQKLVLNMLTTASMILIGKCYQNLMVDVQASNQKLVARAIRIVMQATECSREIAETTLALAENNAKLAIMMILADLDKDGAEQLLSQQQGKISRYTIV</sequence>
<proteinExistence type="inferred from homology"/>
<comment type="function">
    <text evidence="1">Specifically catalyzes the cleavage of the D-lactyl ether substituent of MurNAc 6-phosphate, producing GlcNAc 6-phosphate and D-lactate. Together with AnmK, is also required for the utilization of anhydro-N-acetylmuramic acid (anhMurNAc) either imported from the medium or derived from its own cell wall murein, and thus plays a role in cell wall recycling.</text>
</comment>
<comment type="catalytic activity">
    <reaction evidence="1">
        <text>N-acetyl-D-muramate 6-phosphate + H2O = N-acetyl-D-glucosamine 6-phosphate + (R)-lactate</text>
        <dbReference type="Rhea" id="RHEA:26410"/>
        <dbReference type="ChEBI" id="CHEBI:15377"/>
        <dbReference type="ChEBI" id="CHEBI:16004"/>
        <dbReference type="ChEBI" id="CHEBI:57513"/>
        <dbReference type="ChEBI" id="CHEBI:58722"/>
        <dbReference type="EC" id="4.2.1.126"/>
    </reaction>
</comment>
<comment type="pathway">
    <text evidence="1">Amino-sugar metabolism; 1,6-anhydro-N-acetylmuramate degradation.</text>
</comment>
<comment type="pathway">
    <text evidence="1">Amino-sugar metabolism; N-acetylmuramate degradation.</text>
</comment>
<comment type="pathway">
    <text evidence="1">Cell wall biogenesis; peptidoglycan recycling.</text>
</comment>
<comment type="subunit">
    <text evidence="1">Homodimer.</text>
</comment>
<comment type="miscellaneous">
    <text evidence="1">A lyase-type mechanism (elimination/hydration) is suggested for the cleavage of the lactyl ether bond of MurNAc 6-phosphate, with the formation of an alpha,beta-unsaturated aldehyde intermediate with (E)-stereochemistry, followed by the syn addition of water to give product.</text>
</comment>
<comment type="similarity">
    <text evidence="1">Belongs to the GCKR-like family. MurNAc-6-P etherase subfamily.</text>
</comment>
<reference key="1">
    <citation type="journal article" date="2009" name="J. Bacteriol.">
        <title>Complete genome sequence of Haemophilus parasuis SH0165.</title>
        <authorList>
            <person name="Yue M."/>
            <person name="Yang F."/>
            <person name="Yang J."/>
            <person name="Bei W."/>
            <person name="Cai X."/>
            <person name="Chen L."/>
            <person name="Dong J."/>
            <person name="Zhou R."/>
            <person name="Jin M."/>
            <person name="Jin Q."/>
            <person name="Chen H."/>
        </authorList>
    </citation>
    <scope>NUCLEOTIDE SEQUENCE [LARGE SCALE GENOMIC DNA]</scope>
    <source>
        <strain>SH0165</strain>
    </source>
</reference>
<gene>
    <name evidence="1" type="primary">murQ</name>
    <name type="ordered locus">HAPS_0707</name>
</gene>
<protein>
    <recommendedName>
        <fullName evidence="1">N-acetylmuramic acid 6-phosphate etherase</fullName>
        <shortName evidence="1">MurNAc-6-P etherase</shortName>
        <ecNumber evidence="1">4.2.1.126</ecNumber>
    </recommendedName>
    <alternativeName>
        <fullName evidence="1">N-acetylmuramic acid 6-phosphate hydrolase</fullName>
    </alternativeName>
    <alternativeName>
        <fullName evidence="1">N-acetylmuramic acid 6-phosphate lyase</fullName>
    </alternativeName>
</protein>
<evidence type="ECO:0000255" key="1">
    <source>
        <dbReference type="HAMAP-Rule" id="MF_00068"/>
    </source>
</evidence>
<feature type="chain" id="PRO_1000118013" description="N-acetylmuramic acid 6-phosphate etherase">
    <location>
        <begin position="1"/>
        <end position="304"/>
    </location>
</feature>
<feature type="domain" description="SIS" evidence="1">
    <location>
        <begin position="62"/>
        <end position="225"/>
    </location>
</feature>
<feature type="active site" description="Proton donor" evidence="1">
    <location>
        <position position="90"/>
    </location>
</feature>
<feature type="active site" evidence="1">
    <location>
        <position position="121"/>
    </location>
</feature>